<keyword id="KW-0597">Phosphoprotein</keyword>
<keyword id="KW-1185">Reference proteome</keyword>
<feature type="chain" id="PRO_0000211418" description="Calcipressin-2">
    <location>
        <begin position="1"/>
        <end position="197"/>
    </location>
</feature>
<feature type="region of interest" description="Disordered" evidence="1">
    <location>
        <begin position="166"/>
        <end position="197"/>
    </location>
</feature>
<feature type="modified residue" description="Phosphoserine" evidence="3">
    <location>
        <position position="167"/>
    </location>
</feature>
<feature type="sequence conflict" description="In Ref. 3; BAB71955." evidence="2" ref="3">
    <original>R</original>
    <variation>K</variation>
    <location>
        <position position="77"/>
    </location>
</feature>
<feature type="sequence conflict" description="In Ref. 3; BAB71955." evidence="2" ref="3">
    <original>N</original>
    <variation>K</variation>
    <location>
        <position position="132"/>
    </location>
</feature>
<feature type="sequence conflict" description="In Ref. 3; BAB71955." evidence="2" ref="3">
    <original>T</original>
    <variation>N</variation>
    <location>
        <position position="177"/>
    </location>
</feature>
<reference key="1">
    <citation type="journal article" date="2000" name="J. Biol. Chem.">
        <title>A protein encoded within the Down syndrome critical region is enriched in striated muscles and inhibits calcineurin signaling.</title>
        <authorList>
            <person name="Rothermel B."/>
            <person name="Vega R.B."/>
            <person name="Yang J."/>
            <person name="Wu H."/>
            <person name="Bassel-Duby R."/>
            <person name="Williams R.S."/>
        </authorList>
    </citation>
    <scope>NUCLEOTIDE SEQUENCE [MRNA]</scope>
</reference>
<reference key="2">
    <citation type="journal article" date="2000" name="Gene">
        <title>The murine DSCR1-like (Down syndrome candidate region 1) gene family: conserved synteny with the human orthologous genes.</title>
        <authorList>
            <person name="Strippoli P."/>
            <person name="Petrini M."/>
            <person name="Lenzi L."/>
            <person name="Carinci P."/>
            <person name="Zannotti M."/>
        </authorList>
    </citation>
    <scope>NUCLEOTIDE SEQUENCE [MRNA]</scope>
    <source>
        <strain>BALB/cJ</strain>
        <tissue>Brain</tissue>
    </source>
</reference>
<reference key="3">
    <citation type="submission" date="2001-05" db="EMBL/GenBank/DDBJ databases">
        <title>Calcineurin inhibitory protein ZAKI-4.</title>
        <authorList>
            <person name="Kanou Y."/>
            <person name="Miyazaki T."/>
            <person name="Seo H."/>
            <person name="Murata Y."/>
        </authorList>
    </citation>
    <scope>NUCLEOTIDE SEQUENCE [MRNA]</scope>
</reference>
<reference key="4">
    <citation type="journal article" date="2004" name="Genome Res.">
        <title>The status, quality, and expansion of the NIH full-length cDNA project: the Mammalian Gene Collection (MGC).</title>
        <authorList>
            <consortium name="The MGC Project Team"/>
        </authorList>
    </citation>
    <scope>NUCLEOTIDE SEQUENCE [LARGE SCALE MRNA]</scope>
    <source>
        <strain>C57BL/6J</strain>
        <tissue>Brain</tissue>
        <tissue>Eye</tissue>
    </source>
</reference>
<reference key="5">
    <citation type="journal article" date="2010" name="Cell">
        <title>A tissue-specific atlas of mouse protein phosphorylation and expression.</title>
        <authorList>
            <person name="Huttlin E.L."/>
            <person name="Jedrychowski M.P."/>
            <person name="Elias J.E."/>
            <person name="Goswami T."/>
            <person name="Rad R."/>
            <person name="Beausoleil S.A."/>
            <person name="Villen J."/>
            <person name="Haas W."/>
            <person name="Sowa M.E."/>
            <person name="Gygi S.P."/>
        </authorList>
    </citation>
    <scope>PHOSPHORYLATION [LARGE SCALE ANALYSIS] AT SER-167</scope>
    <scope>IDENTIFICATION BY MASS SPECTROMETRY [LARGE SCALE ANALYSIS]</scope>
    <source>
        <tissue>Brain</tissue>
    </source>
</reference>
<dbReference type="EMBL" id="AF237791">
    <property type="protein sequence ID" value="AAF63487.1"/>
    <property type="molecule type" value="mRNA"/>
</dbReference>
<dbReference type="EMBL" id="AF237887">
    <property type="protein sequence ID" value="AAF62538.1"/>
    <property type="molecule type" value="mRNA"/>
</dbReference>
<dbReference type="EMBL" id="AB061524">
    <property type="protein sequence ID" value="BAB71955.1"/>
    <property type="status" value="ALT_INIT"/>
    <property type="molecule type" value="mRNA"/>
</dbReference>
<dbReference type="EMBL" id="BC047153">
    <property type="protein sequence ID" value="AAH47153.1"/>
    <property type="molecule type" value="mRNA"/>
</dbReference>
<dbReference type="EMBL" id="BC049096">
    <property type="protein sequence ID" value="AAH49096.1"/>
    <property type="molecule type" value="mRNA"/>
</dbReference>
<dbReference type="EMBL" id="BC062141">
    <property type="protein sequence ID" value="AAH62141.1"/>
    <property type="molecule type" value="mRNA"/>
</dbReference>
<dbReference type="CCDS" id="CCDS28801.1"/>
<dbReference type="RefSeq" id="NP_001273583.1">
    <property type="nucleotide sequence ID" value="NM_001286654.1"/>
</dbReference>
<dbReference type="RefSeq" id="NP_085101.1">
    <property type="nucleotide sequence ID" value="NM_030598.2"/>
</dbReference>
<dbReference type="RefSeq" id="NP_997532.1">
    <property type="nucleotide sequence ID" value="NM_207649.1"/>
</dbReference>
<dbReference type="SMR" id="Q9JHG2"/>
<dbReference type="BioGRID" id="207523">
    <property type="interactions" value="1"/>
</dbReference>
<dbReference type="FunCoup" id="Q9JHG2">
    <property type="interactions" value="1551"/>
</dbReference>
<dbReference type="STRING" id="10090.ENSMUSP00000039473"/>
<dbReference type="GlyGen" id="Q9JHG2">
    <property type="glycosylation" value="1 site"/>
</dbReference>
<dbReference type="iPTMnet" id="Q9JHG2"/>
<dbReference type="PhosphoSitePlus" id="Q9JHG2"/>
<dbReference type="PaxDb" id="10090-ENSMUSP00000039473"/>
<dbReference type="ProteomicsDB" id="255136"/>
<dbReference type="Pumba" id="Q9JHG2"/>
<dbReference type="Antibodypedia" id="30708">
    <property type="antibodies" value="231 antibodies from 30 providers"/>
</dbReference>
<dbReference type="DNASU" id="53901"/>
<dbReference type="Ensembl" id="ENSMUST00000044792.6">
    <property type="protein sequence ID" value="ENSMUSP00000048013.5"/>
    <property type="gene ID" value="ENSMUSG00000039601.17"/>
</dbReference>
<dbReference type="Ensembl" id="ENSMUST00000177857.9">
    <property type="protein sequence ID" value="ENSMUSP00000137211.2"/>
    <property type="gene ID" value="ENSMUSG00000039601.17"/>
</dbReference>
<dbReference type="GeneID" id="53901"/>
<dbReference type="KEGG" id="mmu:53901"/>
<dbReference type="UCSC" id="uc008cpp.1">
    <property type="organism name" value="mouse"/>
</dbReference>
<dbReference type="AGR" id="MGI:1858219"/>
<dbReference type="CTD" id="10231"/>
<dbReference type="MGI" id="MGI:1858219">
    <property type="gene designation" value="Rcan2"/>
</dbReference>
<dbReference type="VEuPathDB" id="HostDB:ENSMUSG00000039601"/>
<dbReference type="eggNOG" id="KOG4019">
    <property type="taxonomic scope" value="Eukaryota"/>
</dbReference>
<dbReference type="GeneTree" id="ENSGT00940000159767"/>
<dbReference type="HOGENOM" id="CLU_076190_2_1_1"/>
<dbReference type="InParanoid" id="Q9JHG2"/>
<dbReference type="OrthoDB" id="17212at2759"/>
<dbReference type="PhylomeDB" id="Q9JHG2"/>
<dbReference type="BioGRID-ORCS" id="53901">
    <property type="hits" value="4 hits in 76 CRISPR screens"/>
</dbReference>
<dbReference type="ChiTaRS" id="Rcan2">
    <property type="organism name" value="mouse"/>
</dbReference>
<dbReference type="PRO" id="PR:Q9JHG2"/>
<dbReference type="Proteomes" id="UP000000589">
    <property type="component" value="Chromosome 17"/>
</dbReference>
<dbReference type="RNAct" id="Q9JHG2">
    <property type="molecule type" value="protein"/>
</dbReference>
<dbReference type="Bgee" id="ENSMUSG00000039601">
    <property type="expression patterns" value="Expressed in interventricular septum and 211 other cell types or tissues"/>
</dbReference>
<dbReference type="ExpressionAtlas" id="Q9JHG2">
    <property type="expression patterns" value="baseline and differential"/>
</dbReference>
<dbReference type="GO" id="GO:0003676">
    <property type="term" value="F:nucleic acid binding"/>
    <property type="evidence" value="ECO:0007669"/>
    <property type="project" value="InterPro"/>
</dbReference>
<dbReference type="GO" id="GO:0033173">
    <property type="term" value="P:calcineurin-NFAT signaling cascade"/>
    <property type="evidence" value="ECO:0000315"/>
    <property type="project" value="MGI"/>
</dbReference>
<dbReference type="GO" id="GO:0031987">
    <property type="term" value="P:locomotion involved in locomotory behavior"/>
    <property type="evidence" value="ECO:0000316"/>
    <property type="project" value="MGI"/>
</dbReference>
<dbReference type="GO" id="GO:0007219">
    <property type="term" value="P:Notch signaling pathway"/>
    <property type="evidence" value="ECO:0000314"/>
    <property type="project" value="MGI"/>
</dbReference>
<dbReference type="GO" id="GO:0006979">
    <property type="term" value="P:response to oxidative stress"/>
    <property type="evidence" value="ECO:0000316"/>
    <property type="project" value="MGI"/>
</dbReference>
<dbReference type="GO" id="GO:0006950">
    <property type="term" value="P:response to stress"/>
    <property type="evidence" value="ECO:0000315"/>
    <property type="project" value="MGI"/>
</dbReference>
<dbReference type="GO" id="GO:0007614">
    <property type="term" value="P:short-term memory"/>
    <property type="evidence" value="ECO:0000316"/>
    <property type="project" value="MGI"/>
</dbReference>
<dbReference type="CDD" id="cd12709">
    <property type="entry name" value="RRM_RCAN2"/>
    <property type="match status" value="1"/>
</dbReference>
<dbReference type="FunFam" id="3.30.70.330:FF:000092">
    <property type="entry name" value="Calcipressin-2 isoform 2"/>
    <property type="match status" value="1"/>
</dbReference>
<dbReference type="Gene3D" id="3.30.70.330">
    <property type="match status" value="1"/>
</dbReference>
<dbReference type="InterPro" id="IPR006931">
    <property type="entry name" value="Calcipressin"/>
</dbReference>
<dbReference type="InterPro" id="IPR012677">
    <property type="entry name" value="Nucleotide-bd_a/b_plait_sf"/>
</dbReference>
<dbReference type="InterPro" id="IPR035979">
    <property type="entry name" value="RBD_domain_sf"/>
</dbReference>
<dbReference type="InterPro" id="IPR034919">
    <property type="entry name" value="RCAN2_RRM"/>
</dbReference>
<dbReference type="PANTHER" id="PTHR10300">
    <property type="entry name" value="CALCIPRESSIN"/>
    <property type="match status" value="1"/>
</dbReference>
<dbReference type="PANTHER" id="PTHR10300:SF5">
    <property type="entry name" value="CALCIPRESSIN-2"/>
    <property type="match status" value="1"/>
</dbReference>
<dbReference type="Pfam" id="PF04847">
    <property type="entry name" value="Calcipressin"/>
    <property type="match status" value="1"/>
</dbReference>
<dbReference type="SUPFAM" id="SSF54928">
    <property type="entry name" value="RNA-binding domain, RBD"/>
    <property type="match status" value="1"/>
</dbReference>
<organism>
    <name type="scientific">Mus musculus</name>
    <name type="common">Mouse</name>
    <dbReference type="NCBI Taxonomy" id="10090"/>
    <lineage>
        <taxon>Eukaryota</taxon>
        <taxon>Metazoa</taxon>
        <taxon>Chordata</taxon>
        <taxon>Craniata</taxon>
        <taxon>Vertebrata</taxon>
        <taxon>Euteleostomi</taxon>
        <taxon>Mammalia</taxon>
        <taxon>Eutheria</taxon>
        <taxon>Euarchontoglires</taxon>
        <taxon>Glires</taxon>
        <taxon>Rodentia</taxon>
        <taxon>Myomorpha</taxon>
        <taxon>Muroidea</taxon>
        <taxon>Muridae</taxon>
        <taxon>Murinae</taxon>
        <taxon>Mus</taxon>
        <taxon>Mus</taxon>
    </lineage>
</organism>
<evidence type="ECO:0000256" key="1">
    <source>
        <dbReference type="SAM" id="MobiDB-lite"/>
    </source>
</evidence>
<evidence type="ECO:0000305" key="2"/>
<evidence type="ECO:0007744" key="3">
    <source>
    </source>
</evidence>
<sequence length="197" mass="22025">MPAPSMDCDVSTLVACVVDVEVFTNQEVKEKFEGLFRTYDECVTFQLFKSFRRVRINFSHPKSAARARIELHETQFRGKKLKLYFAQVQTPETDGDKLHLAPPQPAKQFLISPPSSPPVGWKPISDATPVLNYDLLYAVAKLGPGEKYELHAGTESTPSVVVHVCDSDMEEEEDPKTSPKPKIIQTRRPGLPPSVSN</sequence>
<comment type="function">
    <text>Inhibits calcineurin-dependent transcriptional responses by binding to the catalytic domain of calcineurin A. Could play a role during central nervous system development.</text>
</comment>
<comment type="tissue specificity">
    <text>Highest expression in heart, skeletal muscle and brain. Lower expression in all other tissues.</text>
</comment>
<comment type="similarity">
    <text evidence="2">Belongs to the RCAN family.</text>
</comment>
<comment type="sequence caution" evidence="2">
    <conflict type="erroneous initiation">
        <sequence resource="EMBL-CDS" id="BAB71955"/>
    </conflict>
</comment>
<name>RCAN2_MOUSE</name>
<accession>Q9JHG2</accession>
<accession>Q8VIP5</accession>
<proteinExistence type="evidence at protein level"/>
<protein>
    <recommendedName>
        <fullName>Calcipressin-2</fullName>
    </recommendedName>
    <alternativeName>
        <fullName>Calcineurin inhibitory protein ZAKI-4</fullName>
    </alternativeName>
    <alternativeName>
        <fullName>Down syndrome candidate region 1-like protein 1</fullName>
    </alternativeName>
    <alternativeName>
        <fullName>Myocyte-enriched calcineurin-interacting protein 2</fullName>
        <shortName>MCIP2</shortName>
    </alternativeName>
    <alternativeName>
        <fullName>Regulator of calcineurin 2</fullName>
    </alternativeName>
</protein>
<gene>
    <name type="primary">Rcan2</name>
    <name type="synonym">Dscr1l1</name>
    <name type="synonym">Zaki4</name>
</gene>